<evidence type="ECO:0000255" key="1">
    <source>
        <dbReference type="HAMAP-Rule" id="MF_01082"/>
    </source>
</evidence>
<proteinExistence type="inferred from homology"/>
<accession>A4XWR3</accession>
<comment type="function">
    <text evidence="1">Responsible for synthesis of pseudouridine from uracil-13 in transfer RNAs.</text>
</comment>
<comment type="catalytic activity">
    <reaction evidence="1">
        <text>uridine(13) in tRNA = pseudouridine(13) in tRNA</text>
        <dbReference type="Rhea" id="RHEA:42540"/>
        <dbReference type="Rhea" id="RHEA-COMP:10105"/>
        <dbReference type="Rhea" id="RHEA-COMP:10106"/>
        <dbReference type="ChEBI" id="CHEBI:65314"/>
        <dbReference type="ChEBI" id="CHEBI:65315"/>
        <dbReference type="EC" id="5.4.99.27"/>
    </reaction>
</comment>
<comment type="similarity">
    <text evidence="1">Belongs to the pseudouridine synthase TruD family.</text>
</comment>
<reference key="1">
    <citation type="submission" date="2007-04" db="EMBL/GenBank/DDBJ databases">
        <title>Complete sequence of Pseudomonas mendocina ymp.</title>
        <authorList>
            <consortium name="US DOE Joint Genome Institute"/>
            <person name="Copeland A."/>
            <person name="Lucas S."/>
            <person name="Lapidus A."/>
            <person name="Barry K."/>
            <person name="Glavina del Rio T."/>
            <person name="Dalin E."/>
            <person name="Tice H."/>
            <person name="Pitluck S."/>
            <person name="Kiss H."/>
            <person name="Brettin T."/>
            <person name="Detter J.C."/>
            <person name="Bruce D."/>
            <person name="Han C."/>
            <person name="Schmutz J."/>
            <person name="Larimer F."/>
            <person name="Land M."/>
            <person name="Hauser L."/>
            <person name="Kyrpides N."/>
            <person name="Mikhailova N."/>
            <person name="Hersman L."/>
            <person name="Dubois J."/>
            <person name="Maurice P."/>
            <person name="Richardson P."/>
        </authorList>
    </citation>
    <scope>NUCLEOTIDE SEQUENCE [LARGE SCALE GENOMIC DNA]</scope>
    <source>
        <strain>ymp</strain>
    </source>
</reference>
<name>TRUD_ECTM1</name>
<gene>
    <name evidence="1" type="primary">truD</name>
    <name type="ordered locus">Pmen_3025</name>
</gene>
<dbReference type="EC" id="5.4.99.27" evidence="1"/>
<dbReference type="EMBL" id="CP000680">
    <property type="protein sequence ID" value="ABP85779.1"/>
    <property type="molecule type" value="Genomic_DNA"/>
</dbReference>
<dbReference type="SMR" id="A4XWR3"/>
<dbReference type="STRING" id="399739.Pmen_3025"/>
<dbReference type="KEGG" id="pmy:Pmen_3025"/>
<dbReference type="PATRIC" id="fig|399739.8.peg.3071"/>
<dbReference type="eggNOG" id="COG0585">
    <property type="taxonomic scope" value="Bacteria"/>
</dbReference>
<dbReference type="HOGENOM" id="CLU_005281_4_0_6"/>
<dbReference type="OrthoDB" id="1550679at2"/>
<dbReference type="GO" id="GO:0005829">
    <property type="term" value="C:cytosol"/>
    <property type="evidence" value="ECO:0007669"/>
    <property type="project" value="TreeGrafter"/>
</dbReference>
<dbReference type="GO" id="GO:0003723">
    <property type="term" value="F:RNA binding"/>
    <property type="evidence" value="ECO:0007669"/>
    <property type="project" value="InterPro"/>
</dbReference>
<dbReference type="GO" id="GO:0160150">
    <property type="term" value="F:tRNA pseudouridine(13) synthase activity"/>
    <property type="evidence" value="ECO:0007669"/>
    <property type="project" value="UniProtKB-EC"/>
</dbReference>
<dbReference type="GO" id="GO:0031119">
    <property type="term" value="P:tRNA pseudouridine synthesis"/>
    <property type="evidence" value="ECO:0007669"/>
    <property type="project" value="UniProtKB-UniRule"/>
</dbReference>
<dbReference type="CDD" id="cd02575">
    <property type="entry name" value="PseudoU_synth_EcTruD"/>
    <property type="match status" value="1"/>
</dbReference>
<dbReference type="Gene3D" id="3.30.2350.20">
    <property type="entry name" value="TruD, catalytic domain"/>
    <property type="match status" value="1"/>
</dbReference>
<dbReference type="Gene3D" id="3.30.2340.10">
    <property type="entry name" value="TruD, insertion domain"/>
    <property type="match status" value="1"/>
</dbReference>
<dbReference type="HAMAP" id="MF_01082">
    <property type="entry name" value="TruD"/>
    <property type="match status" value="1"/>
</dbReference>
<dbReference type="InterPro" id="IPR020103">
    <property type="entry name" value="PsdUridine_synth_cat_dom_sf"/>
</dbReference>
<dbReference type="InterPro" id="IPR001656">
    <property type="entry name" value="PsdUridine_synth_TruD"/>
</dbReference>
<dbReference type="InterPro" id="IPR020119">
    <property type="entry name" value="PsdUridine_synth_TruD_CS"/>
</dbReference>
<dbReference type="InterPro" id="IPR011760">
    <property type="entry name" value="PsdUridine_synth_TruD_insert"/>
</dbReference>
<dbReference type="InterPro" id="IPR042214">
    <property type="entry name" value="TruD_catalytic"/>
</dbReference>
<dbReference type="InterPro" id="IPR043165">
    <property type="entry name" value="TruD_insert_sf"/>
</dbReference>
<dbReference type="InterPro" id="IPR050170">
    <property type="entry name" value="TruD_pseudoU_synthase"/>
</dbReference>
<dbReference type="NCBIfam" id="NF002153">
    <property type="entry name" value="PRK00984.1-2"/>
    <property type="match status" value="1"/>
</dbReference>
<dbReference type="PANTHER" id="PTHR47811">
    <property type="entry name" value="TRNA PSEUDOURIDINE SYNTHASE D"/>
    <property type="match status" value="1"/>
</dbReference>
<dbReference type="PANTHER" id="PTHR47811:SF1">
    <property type="entry name" value="TRNA PSEUDOURIDINE SYNTHASE D"/>
    <property type="match status" value="1"/>
</dbReference>
<dbReference type="Pfam" id="PF01142">
    <property type="entry name" value="TruD"/>
    <property type="match status" value="2"/>
</dbReference>
<dbReference type="SUPFAM" id="SSF55120">
    <property type="entry name" value="Pseudouridine synthase"/>
    <property type="match status" value="1"/>
</dbReference>
<dbReference type="PROSITE" id="PS50984">
    <property type="entry name" value="TRUD"/>
    <property type="match status" value="1"/>
</dbReference>
<dbReference type="PROSITE" id="PS01268">
    <property type="entry name" value="UPF0024"/>
    <property type="match status" value="1"/>
</dbReference>
<keyword id="KW-0413">Isomerase</keyword>
<keyword id="KW-0819">tRNA processing</keyword>
<protein>
    <recommendedName>
        <fullName evidence="1">tRNA pseudouridine synthase D</fullName>
        <ecNumber evidence="1">5.4.99.27</ecNumber>
    </recommendedName>
    <alternativeName>
        <fullName evidence="1">tRNA pseudouridine(13) synthase</fullName>
    </alternativeName>
    <alternativeName>
        <fullName evidence="1">tRNA pseudouridylate synthase D</fullName>
    </alternativeName>
    <alternativeName>
        <fullName evidence="1">tRNA-uridine isomerase D</fullName>
    </alternativeName>
</protein>
<feature type="chain" id="PRO_1000084757" description="tRNA pseudouridine synthase D">
    <location>
        <begin position="1"/>
        <end position="352"/>
    </location>
</feature>
<feature type="domain" description="TRUD" evidence="1">
    <location>
        <begin position="157"/>
        <end position="303"/>
    </location>
</feature>
<feature type="active site" description="Nucleophile" evidence="1">
    <location>
        <position position="81"/>
    </location>
</feature>
<organism>
    <name type="scientific">Ectopseudomonas mendocina (strain ymp)</name>
    <name type="common">Pseudomonas mendocina</name>
    <dbReference type="NCBI Taxonomy" id="399739"/>
    <lineage>
        <taxon>Bacteria</taxon>
        <taxon>Pseudomonadati</taxon>
        <taxon>Pseudomonadota</taxon>
        <taxon>Gammaproteobacteria</taxon>
        <taxon>Pseudomonadales</taxon>
        <taxon>Pseudomonadaceae</taxon>
        <taxon>Ectopseudomonas</taxon>
    </lineage>
</organism>
<sequence length="352" mass="38599">MNELQLLGPRAHGEACGRAVLKASAEDFQVDEVLDIPLTGQGEHLWLWVEKRGLNTEEAARRIARAAGLPLKAVSYAGLKDRQALTRQWFSLHLPGKADPDLAAAQGDDLAILRSQRHNRKLQRGAHAANGFTLRLTALEADRDALEQRLQRIAEQGVPNYFGLQRFGFDGGNVVQARDFAARQELPVQRNLRSRLLSAARSHLFNQVLARRVAAGTWNQAQIGDLLAFTGSRSFFLAGEAECGDPRLAILDLHPTGPLWGDGPLPTGGATQMLEQSVADEAGQLVDWLVKADMAHERRILRLPIGGLSWHYPEPDILQLAFVLPAGCFATVVVRELLDLVPAGQTDTPCEF</sequence>